<proteinExistence type="inferred from homology"/>
<keyword id="KW-0150">Chloroplast</keyword>
<keyword id="KW-0472">Membrane</keyword>
<keyword id="KW-0520">NAD</keyword>
<keyword id="KW-0521">NADP</keyword>
<keyword id="KW-0934">Plastid</keyword>
<keyword id="KW-0618">Plastoquinone</keyword>
<keyword id="KW-0874">Quinone</keyword>
<keyword id="KW-0793">Thylakoid</keyword>
<keyword id="KW-1278">Translocase</keyword>
<keyword id="KW-0812">Transmembrane</keyword>
<keyword id="KW-1133">Transmembrane helix</keyword>
<keyword id="KW-0813">Transport</keyword>
<organism>
    <name type="scientific">Chaetosphaeridium globosum</name>
    <name type="common">Charophycean green alga</name>
    <name type="synonym">Herposteiron globosum</name>
    <dbReference type="NCBI Taxonomy" id="96477"/>
    <lineage>
        <taxon>Eukaryota</taxon>
        <taxon>Viridiplantae</taxon>
        <taxon>Streptophyta</taxon>
        <taxon>Coleochaetophyceae</taxon>
        <taxon>Coleochaetales</taxon>
        <taxon>Chaetosphaeridiaceae</taxon>
        <taxon>Chaetosphaeridium</taxon>
    </lineage>
</organism>
<evidence type="ECO:0000250" key="1"/>
<evidence type="ECO:0000255" key="2"/>
<evidence type="ECO:0000305" key="3"/>
<gene>
    <name type="primary">ndhG</name>
</gene>
<geneLocation type="chloroplast"/>
<comment type="function">
    <text evidence="1">NDH shuttles electrons from NAD(P)H:plastoquinone, via FMN and iron-sulfur (Fe-S) centers, to quinones in the photosynthetic chain and possibly in a chloroplast respiratory chain. The immediate electron acceptor for the enzyme in this species is believed to be plastoquinone. Couples the redox reaction to proton translocation, and thus conserves the redox energy in a proton gradient (By similarity).</text>
</comment>
<comment type="catalytic activity">
    <reaction>
        <text>a plastoquinone + NADH + (n+1) H(+)(in) = a plastoquinol + NAD(+) + n H(+)(out)</text>
        <dbReference type="Rhea" id="RHEA:42608"/>
        <dbReference type="Rhea" id="RHEA-COMP:9561"/>
        <dbReference type="Rhea" id="RHEA-COMP:9562"/>
        <dbReference type="ChEBI" id="CHEBI:15378"/>
        <dbReference type="ChEBI" id="CHEBI:17757"/>
        <dbReference type="ChEBI" id="CHEBI:57540"/>
        <dbReference type="ChEBI" id="CHEBI:57945"/>
        <dbReference type="ChEBI" id="CHEBI:62192"/>
    </reaction>
</comment>
<comment type="catalytic activity">
    <reaction>
        <text>a plastoquinone + NADPH + (n+1) H(+)(in) = a plastoquinol + NADP(+) + n H(+)(out)</text>
        <dbReference type="Rhea" id="RHEA:42612"/>
        <dbReference type="Rhea" id="RHEA-COMP:9561"/>
        <dbReference type="Rhea" id="RHEA-COMP:9562"/>
        <dbReference type="ChEBI" id="CHEBI:15378"/>
        <dbReference type="ChEBI" id="CHEBI:17757"/>
        <dbReference type="ChEBI" id="CHEBI:57783"/>
        <dbReference type="ChEBI" id="CHEBI:58349"/>
        <dbReference type="ChEBI" id="CHEBI:62192"/>
    </reaction>
</comment>
<comment type="subunit">
    <text evidence="1">NDH is composed of at least 16 different subunits, 5 of which are encoded in the nucleus.</text>
</comment>
<comment type="subcellular location">
    <subcellularLocation>
        <location evidence="1">Plastid</location>
        <location evidence="1">Chloroplast thylakoid membrane</location>
        <topology evidence="1">Multi-pass membrane protein</topology>
    </subcellularLocation>
</comment>
<comment type="similarity">
    <text evidence="3">Belongs to the complex I subunit 6 family.</text>
</comment>
<name>NU6C_CHAGL</name>
<feature type="chain" id="PRO_0000360237" description="NAD(P)H-quinone oxidoreductase subunit 6, chloroplastic">
    <location>
        <begin position="1"/>
        <end position="179"/>
    </location>
</feature>
<feature type="transmembrane region" description="Helical" evidence="2">
    <location>
        <begin position="8"/>
        <end position="28"/>
    </location>
</feature>
<feature type="transmembrane region" description="Helical" evidence="2">
    <location>
        <begin position="30"/>
        <end position="50"/>
    </location>
</feature>
<feature type="transmembrane region" description="Helical" evidence="2">
    <location>
        <begin position="58"/>
        <end position="78"/>
    </location>
</feature>
<feature type="transmembrane region" description="Helical" evidence="2">
    <location>
        <begin position="98"/>
        <end position="118"/>
    </location>
</feature>
<feature type="transmembrane region" description="Helical" evidence="2">
    <location>
        <begin position="150"/>
        <end position="170"/>
    </location>
</feature>
<protein>
    <recommendedName>
        <fullName>NAD(P)H-quinone oxidoreductase subunit 6, chloroplastic</fullName>
        <ecNumber>7.1.1.-</ecNumber>
    </recommendedName>
    <alternativeName>
        <fullName>NAD(P)H dehydrogenase subunit 6</fullName>
    </alternativeName>
    <alternativeName>
        <fullName>NADH-plastoquinone oxidoreductase subunit 6</fullName>
    </alternativeName>
</protein>
<sequence length="179" mass="20041">MLEQSAQITLFVLDFFIFVGALGVVFFNNIIYSALFLGLTFLSVALLYLLLGSEFLSVAQVIIYVGAINVLIVFAIMLVNKPEFDKKDMIWVPIDLKSFCVNFILFSTIVTMIVTTPWKLLVNNIDVKLNSLNFLSPIAKIGYQFLSTLVLPFELLSLLLLIALIGAVIIARRELIEDT</sequence>
<accession>Q8M9T8</accession>
<dbReference type="EC" id="7.1.1.-"/>
<dbReference type="EMBL" id="AF494278">
    <property type="protein sequence ID" value="AAM96520.1"/>
    <property type="molecule type" value="Genomic_DNA"/>
</dbReference>
<dbReference type="RefSeq" id="NP_683855.1">
    <property type="nucleotide sequence ID" value="NC_004115.1"/>
</dbReference>
<dbReference type="SMR" id="Q8M9T8"/>
<dbReference type="GeneID" id="860802"/>
<dbReference type="GO" id="GO:0009535">
    <property type="term" value="C:chloroplast thylakoid membrane"/>
    <property type="evidence" value="ECO:0007669"/>
    <property type="project" value="UniProtKB-SubCell"/>
</dbReference>
<dbReference type="GO" id="GO:0008137">
    <property type="term" value="F:NADH dehydrogenase (ubiquinone) activity"/>
    <property type="evidence" value="ECO:0007669"/>
    <property type="project" value="InterPro"/>
</dbReference>
<dbReference type="GO" id="GO:0048038">
    <property type="term" value="F:quinone binding"/>
    <property type="evidence" value="ECO:0007669"/>
    <property type="project" value="UniProtKB-KW"/>
</dbReference>
<dbReference type="Gene3D" id="1.20.120.1200">
    <property type="entry name" value="NADH-ubiquinone/plastoquinone oxidoreductase chain 6, subunit NuoJ"/>
    <property type="match status" value="1"/>
</dbReference>
<dbReference type="InterPro" id="IPR001457">
    <property type="entry name" value="NADH_UbQ/plastoQ_OxRdtase_su6"/>
</dbReference>
<dbReference type="InterPro" id="IPR042106">
    <property type="entry name" value="Nuo/plastoQ_OxRdtase_6_NuoJ"/>
</dbReference>
<dbReference type="PANTHER" id="PTHR33269">
    <property type="entry name" value="NADH-UBIQUINONE OXIDOREDUCTASE CHAIN 6"/>
    <property type="match status" value="1"/>
</dbReference>
<dbReference type="PANTHER" id="PTHR33269:SF17">
    <property type="entry name" value="NADH-UBIQUINONE OXIDOREDUCTASE CHAIN 6"/>
    <property type="match status" value="1"/>
</dbReference>
<dbReference type="Pfam" id="PF00499">
    <property type="entry name" value="Oxidored_q3"/>
    <property type="match status" value="1"/>
</dbReference>
<reference key="1">
    <citation type="journal article" date="2002" name="Proc. Natl. Acad. Sci. U.S.A.">
        <title>The chloroplast and mitochondrial genome sequences of the charophyte Chaetosphaeridium globosum: insights into the timing of the events that restructured organelle DNAs within the green algal lineage that led to land plants.</title>
        <authorList>
            <person name="Turmel M."/>
            <person name="Otis C."/>
            <person name="Lemieux C."/>
        </authorList>
    </citation>
    <scope>NUCLEOTIDE SEQUENCE [LARGE SCALE GENOMIC DNA]</scope>
    <source>
        <strain>M1311</strain>
    </source>
</reference>